<feature type="chain" id="PRO_1000136838" description="tRNA pseudouridine synthase D">
    <location>
        <begin position="1"/>
        <end position="349"/>
    </location>
</feature>
<feature type="domain" description="TRUD" evidence="1">
    <location>
        <begin position="155"/>
        <end position="303"/>
    </location>
</feature>
<feature type="active site" description="Nucleophile" evidence="1">
    <location>
        <position position="80"/>
    </location>
</feature>
<feature type="binding site" evidence="1">
    <location>
        <position position="27"/>
    </location>
    <ligand>
        <name>substrate</name>
    </ligand>
</feature>
<feature type="binding site" evidence="1">
    <location>
        <position position="129"/>
    </location>
    <ligand>
        <name>substrate</name>
    </ligand>
</feature>
<feature type="binding site" evidence="1">
    <location>
        <position position="329"/>
    </location>
    <ligand>
        <name>substrate</name>
    </ligand>
</feature>
<name>TRUD_ESCF3</name>
<protein>
    <recommendedName>
        <fullName evidence="1">tRNA pseudouridine synthase D</fullName>
        <ecNumber evidence="1">5.4.99.27</ecNumber>
    </recommendedName>
    <alternativeName>
        <fullName evidence="1">tRNA pseudouridine(13) synthase</fullName>
    </alternativeName>
    <alternativeName>
        <fullName evidence="1">tRNA pseudouridylate synthase D</fullName>
    </alternativeName>
    <alternativeName>
        <fullName evidence="1">tRNA-uridine isomerase D</fullName>
    </alternativeName>
</protein>
<reference key="1">
    <citation type="journal article" date="2009" name="PLoS Genet.">
        <title>Organised genome dynamics in the Escherichia coli species results in highly diverse adaptive paths.</title>
        <authorList>
            <person name="Touchon M."/>
            <person name="Hoede C."/>
            <person name="Tenaillon O."/>
            <person name="Barbe V."/>
            <person name="Baeriswyl S."/>
            <person name="Bidet P."/>
            <person name="Bingen E."/>
            <person name="Bonacorsi S."/>
            <person name="Bouchier C."/>
            <person name="Bouvet O."/>
            <person name="Calteau A."/>
            <person name="Chiapello H."/>
            <person name="Clermont O."/>
            <person name="Cruveiller S."/>
            <person name="Danchin A."/>
            <person name="Diard M."/>
            <person name="Dossat C."/>
            <person name="Karoui M.E."/>
            <person name="Frapy E."/>
            <person name="Garry L."/>
            <person name="Ghigo J.M."/>
            <person name="Gilles A.M."/>
            <person name="Johnson J."/>
            <person name="Le Bouguenec C."/>
            <person name="Lescat M."/>
            <person name="Mangenot S."/>
            <person name="Martinez-Jehanne V."/>
            <person name="Matic I."/>
            <person name="Nassif X."/>
            <person name="Oztas S."/>
            <person name="Petit M.A."/>
            <person name="Pichon C."/>
            <person name="Rouy Z."/>
            <person name="Ruf C.S."/>
            <person name="Schneider D."/>
            <person name="Tourret J."/>
            <person name="Vacherie B."/>
            <person name="Vallenet D."/>
            <person name="Medigue C."/>
            <person name="Rocha E.P.C."/>
            <person name="Denamur E."/>
        </authorList>
    </citation>
    <scope>NUCLEOTIDE SEQUENCE [LARGE SCALE GENOMIC DNA]</scope>
    <source>
        <strain>ATCC 35469 / DSM 13698 / BCRC 15582 / CCUG 18766 / IAM 14443 / JCM 21226 / LMG 7866 / NBRC 102419 / NCTC 12128 / CDC 0568-73</strain>
    </source>
</reference>
<gene>
    <name evidence="1" type="primary">truD</name>
    <name type="ordered locus">EFER_0323</name>
</gene>
<sequence>MIEFDNLTYLHGKPQGTGLLKANPEDFVVVEDLGFEPDGEGEHILVRILKNGCNTRFVADALAKFLKIHAREVSFAGQKDKHAVTEQWFCARVPGKEMPDLSAFQLEGCQVLEYARHKRKLRLGALKGNAFTLVLRDVSNRDDVEQRLIDICVKGVPNYFGAQRFGIGGSNLQGALRWAQTNTPVRDRNKRSFWLSAARSALFNQIVAERLKKADVNQVVDGDALQLAGRGSWFVATTEELAELQRRVNDKELMITAALPGSGEWGTQREALAFEQAAVAEETELQTLLVREKVEAARRAMLLYPQQLSWNWWDDVTVEIRFWLPAGSFATSVVRELINTTGEYAHIAE</sequence>
<evidence type="ECO:0000255" key="1">
    <source>
        <dbReference type="HAMAP-Rule" id="MF_01082"/>
    </source>
</evidence>
<comment type="function">
    <text evidence="1">Responsible for synthesis of pseudouridine from uracil-13 in transfer RNAs.</text>
</comment>
<comment type="catalytic activity">
    <reaction evidence="1">
        <text>uridine(13) in tRNA = pseudouridine(13) in tRNA</text>
        <dbReference type="Rhea" id="RHEA:42540"/>
        <dbReference type="Rhea" id="RHEA-COMP:10105"/>
        <dbReference type="Rhea" id="RHEA-COMP:10106"/>
        <dbReference type="ChEBI" id="CHEBI:65314"/>
        <dbReference type="ChEBI" id="CHEBI:65315"/>
        <dbReference type="EC" id="5.4.99.27"/>
    </reaction>
</comment>
<comment type="similarity">
    <text evidence="1">Belongs to the pseudouridine synthase TruD family.</text>
</comment>
<accession>B7LWL0</accession>
<dbReference type="EC" id="5.4.99.27" evidence="1"/>
<dbReference type="EMBL" id="CU928158">
    <property type="protein sequence ID" value="CAQ87886.1"/>
    <property type="molecule type" value="Genomic_DNA"/>
</dbReference>
<dbReference type="RefSeq" id="WP_000568909.1">
    <property type="nucleotide sequence ID" value="NC_011740.1"/>
</dbReference>
<dbReference type="SMR" id="B7LWL0"/>
<dbReference type="GeneID" id="75058605"/>
<dbReference type="KEGG" id="efe:EFER_0323"/>
<dbReference type="HOGENOM" id="CLU_005281_4_0_6"/>
<dbReference type="OrthoDB" id="1550679at2"/>
<dbReference type="Proteomes" id="UP000000745">
    <property type="component" value="Chromosome"/>
</dbReference>
<dbReference type="GO" id="GO:0005829">
    <property type="term" value="C:cytosol"/>
    <property type="evidence" value="ECO:0007669"/>
    <property type="project" value="TreeGrafter"/>
</dbReference>
<dbReference type="GO" id="GO:0003723">
    <property type="term" value="F:RNA binding"/>
    <property type="evidence" value="ECO:0007669"/>
    <property type="project" value="InterPro"/>
</dbReference>
<dbReference type="GO" id="GO:0160150">
    <property type="term" value="F:tRNA pseudouridine(13) synthase activity"/>
    <property type="evidence" value="ECO:0007669"/>
    <property type="project" value="UniProtKB-EC"/>
</dbReference>
<dbReference type="GO" id="GO:0031119">
    <property type="term" value="P:tRNA pseudouridine synthesis"/>
    <property type="evidence" value="ECO:0007669"/>
    <property type="project" value="UniProtKB-UniRule"/>
</dbReference>
<dbReference type="CDD" id="cd02575">
    <property type="entry name" value="PseudoU_synth_EcTruD"/>
    <property type="match status" value="1"/>
</dbReference>
<dbReference type="FunFam" id="3.30.2340.10:FF:000001">
    <property type="entry name" value="tRNA pseudouridine synthase D"/>
    <property type="match status" value="1"/>
</dbReference>
<dbReference type="FunFam" id="3.30.2350.20:FF:000001">
    <property type="entry name" value="tRNA pseudouridine synthase D"/>
    <property type="match status" value="1"/>
</dbReference>
<dbReference type="Gene3D" id="3.30.2350.20">
    <property type="entry name" value="TruD, catalytic domain"/>
    <property type="match status" value="1"/>
</dbReference>
<dbReference type="Gene3D" id="3.30.2340.10">
    <property type="entry name" value="TruD, insertion domain"/>
    <property type="match status" value="1"/>
</dbReference>
<dbReference type="HAMAP" id="MF_01082">
    <property type="entry name" value="TruD"/>
    <property type="match status" value="1"/>
</dbReference>
<dbReference type="InterPro" id="IPR020103">
    <property type="entry name" value="PsdUridine_synth_cat_dom_sf"/>
</dbReference>
<dbReference type="InterPro" id="IPR001656">
    <property type="entry name" value="PsdUridine_synth_TruD"/>
</dbReference>
<dbReference type="InterPro" id="IPR020119">
    <property type="entry name" value="PsdUridine_synth_TruD_CS"/>
</dbReference>
<dbReference type="InterPro" id="IPR011760">
    <property type="entry name" value="PsdUridine_synth_TruD_insert"/>
</dbReference>
<dbReference type="InterPro" id="IPR042214">
    <property type="entry name" value="TruD_catalytic"/>
</dbReference>
<dbReference type="InterPro" id="IPR043165">
    <property type="entry name" value="TruD_insert_sf"/>
</dbReference>
<dbReference type="InterPro" id="IPR050170">
    <property type="entry name" value="TruD_pseudoU_synthase"/>
</dbReference>
<dbReference type="NCBIfam" id="NF002155">
    <property type="entry name" value="PRK00984.1-4"/>
    <property type="match status" value="1"/>
</dbReference>
<dbReference type="NCBIfam" id="TIGR00094">
    <property type="entry name" value="tRNA_TruD_broad"/>
    <property type="match status" value="1"/>
</dbReference>
<dbReference type="PANTHER" id="PTHR47811">
    <property type="entry name" value="TRNA PSEUDOURIDINE SYNTHASE D"/>
    <property type="match status" value="1"/>
</dbReference>
<dbReference type="PANTHER" id="PTHR47811:SF1">
    <property type="entry name" value="TRNA PSEUDOURIDINE SYNTHASE D"/>
    <property type="match status" value="1"/>
</dbReference>
<dbReference type="Pfam" id="PF01142">
    <property type="entry name" value="TruD"/>
    <property type="match status" value="2"/>
</dbReference>
<dbReference type="SUPFAM" id="SSF55120">
    <property type="entry name" value="Pseudouridine synthase"/>
    <property type="match status" value="1"/>
</dbReference>
<dbReference type="PROSITE" id="PS50984">
    <property type="entry name" value="TRUD"/>
    <property type="match status" value="1"/>
</dbReference>
<dbReference type="PROSITE" id="PS01268">
    <property type="entry name" value="UPF0024"/>
    <property type="match status" value="1"/>
</dbReference>
<keyword id="KW-0413">Isomerase</keyword>
<keyword id="KW-0819">tRNA processing</keyword>
<organism>
    <name type="scientific">Escherichia fergusonii (strain ATCC 35469 / DSM 13698 / CCUG 18766 / IAM 14443 / JCM 21226 / LMG 7866 / NBRC 102419 / NCTC 12128 / CDC 0568-73)</name>
    <dbReference type="NCBI Taxonomy" id="585054"/>
    <lineage>
        <taxon>Bacteria</taxon>
        <taxon>Pseudomonadati</taxon>
        <taxon>Pseudomonadota</taxon>
        <taxon>Gammaproteobacteria</taxon>
        <taxon>Enterobacterales</taxon>
        <taxon>Enterobacteriaceae</taxon>
        <taxon>Escherichia</taxon>
    </lineage>
</organism>
<proteinExistence type="inferred from homology"/>